<dbReference type="EMBL" id="Y13723">
    <property type="protein sequence ID" value="CAA74051.1"/>
    <property type="molecule type" value="mRNA"/>
</dbReference>
<dbReference type="EMBL" id="AC005770">
    <property type="protein sequence ID" value="AAC79602.2"/>
    <property type="molecule type" value="Genomic_DNA"/>
</dbReference>
<dbReference type="EMBL" id="CP002685">
    <property type="protein sequence ID" value="AEC09598.1"/>
    <property type="molecule type" value="Genomic_DNA"/>
</dbReference>
<dbReference type="EMBL" id="CP002685">
    <property type="protein sequence ID" value="AEC09600.1"/>
    <property type="molecule type" value="Genomic_DNA"/>
</dbReference>
<dbReference type="EMBL" id="CP002685">
    <property type="protein sequence ID" value="AEC09602.1"/>
    <property type="molecule type" value="Genomic_DNA"/>
</dbReference>
<dbReference type="EMBL" id="BT004266">
    <property type="protein sequence ID" value="AAO42268.1"/>
    <property type="molecule type" value="mRNA"/>
</dbReference>
<dbReference type="EMBL" id="BT005536">
    <property type="protein sequence ID" value="AAO63956.1"/>
    <property type="molecule type" value="mRNA"/>
</dbReference>
<dbReference type="EMBL" id="AY088554">
    <property type="protein sequence ID" value="AAM66086.1"/>
    <property type="molecule type" value="mRNA"/>
</dbReference>
<dbReference type="PIR" id="E84810">
    <property type="entry name" value="E84810"/>
</dbReference>
<dbReference type="RefSeq" id="NP_001031511.1">
    <molecule id="Q9SLG0-1"/>
    <property type="nucleotide sequence ID" value="NM_001036434.2"/>
</dbReference>
<dbReference type="RefSeq" id="NP_030436.1">
    <molecule id="Q9SLG0-1"/>
    <property type="nucleotide sequence ID" value="NM_129445.3"/>
</dbReference>
<dbReference type="RefSeq" id="NP_850304.2">
    <molecule id="Q9SLG0-1"/>
    <property type="nucleotide sequence ID" value="NM_179973.4"/>
</dbReference>
<dbReference type="SMR" id="Q9SLG0"/>
<dbReference type="BioGRID" id="3812">
    <property type="interactions" value="20"/>
</dbReference>
<dbReference type="FunCoup" id="Q9SLG0">
    <property type="interactions" value="3128"/>
</dbReference>
<dbReference type="IntAct" id="Q9SLG0">
    <property type="interactions" value="15"/>
</dbReference>
<dbReference type="STRING" id="3702.Q9SLG0"/>
<dbReference type="iPTMnet" id="Q9SLG0"/>
<dbReference type="EnsemblPlants" id="AT2G38880.1">
    <molecule id="Q9SLG0-1"/>
    <property type="protein sequence ID" value="AT2G38880.1"/>
    <property type="gene ID" value="AT2G38880"/>
</dbReference>
<dbReference type="EnsemblPlants" id="AT2G38880.2">
    <molecule id="Q9SLG0-1"/>
    <property type="protein sequence ID" value="AT2G38880.2"/>
    <property type="gene ID" value="AT2G38880"/>
</dbReference>
<dbReference type="EnsemblPlants" id="AT2G38880.5">
    <molecule id="Q9SLG0-1"/>
    <property type="protein sequence ID" value="AT2G38880.5"/>
    <property type="gene ID" value="AT2G38880"/>
</dbReference>
<dbReference type="GeneID" id="818472"/>
<dbReference type="Gramene" id="AT2G38880.1">
    <molecule id="Q9SLG0-1"/>
    <property type="protein sequence ID" value="AT2G38880.1"/>
    <property type="gene ID" value="AT2G38880"/>
</dbReference>
<dbReference type="Gramene" id="AT2G38880.2">
    <molecule id="Q9SLG0-1"/>
    <property type="protein sequence ID" value="AT2G38880.2"/>
    <property type="gene ID" value="AT2G38880"/>
</dbReference>
<dbReference type="Gramene" id="AT2G38880.5">
    <molecule id="Q9SLG0-1"/>
    <property type="protein sequence ID" value="AT2G38880.5"/>
    <property type="gene ID" value="AT2G38880"/>
</dbReference>
<dbReference type="KEGG" id="ath:AT2G38880"/>
<dbReference type="Araport" id="AT2G38880"/>
<dbReference type="TAIR" id="AT2G38880">
    <property type="gene designation" value="NF-YB1"/>
</dbReference>
<dbReference type="InParanoid" id="Q9SLG0"/>
<dbReference type="OrthoDB" id="386949at2759"/>
<dbReference type="PhylomeDB" id="Q9SLG0"/>
<dbReference type="PRO" id="PR:Q9SLG0"/>
<dbReference type="Proteomes" id="UP000006548">
    <property type="component" value="Chromosome 2"/>
</dbReference>
<dbReference type="ExpressionAtlas" id="Q9SLG0">
    <property type="expression patterns" value="baseline and differential"/>
</dbReference>
<dbReference type="GO" id="GO:0016602">
    <property type="term" value="C:CCAAT-binding factor complex"/>
    <property type="evidence" value="ECO:0007669"/>
    <property type="project" value="InterPro"/>
</dbReference>
<dbReference type="GO" id="GO:0001228">
    <property type="term" value="F:DNA-binding transcription activator activity, RNA polymerase II-specific"/>
    <property type="evidence" value="ECO:0007669"/>
    <property type="project" value="InterPro"/>
</dbReference>
<dbReference type="GO" id="GO:0046982">
    <property type="term" value="F:protein heterodimerization activity"/>
    <property type="evidence" value="ECO:0007669"/>
    <property type="project" value="InterPro"/>
</dbReference>
<dbReference type="GO" id="GO:0043565">
    <property type="term" value="F:sequence-specific DNA binding"/>
    <property type="evidence" value="ECO:0007669"/>
    <property type="project" value="InterPro"/>
</dbReference>
<dbReference type="GO" id="GO:0009408">
    <property type="term" value="P:response to heat"/>
    <property type="evidence" value="ECO:0000270"/>
    <property type="project" value="UniProtKB"/>
</dbReference>
<dbReference type="GO" id="GO:0009414">
    <property type="term" value="P:response to water deprivation"/>
    <property type="evidence" value="ECO:0000270"/>
    <property type="project" value="UniProtKB"/>
</dbReference>
<dbReference type="CDD" id="cd22907">
    <property type="entry name" value="HFD_NFYB"/>
    <property type="match status" value="1"/>
</dbReference>
<dbReference type="FunFam" id="1.10.20.10:FF:000035">
    <property type="entry name" value="Nuclear transcription factor Y subunit B-3"/>
    <property type="match status" value="1"/>
</dbReference>
<dbReference type="Gene3D" id="1.10.20.10">
    <property type="entry name" value="Histone, subunit A"/>
    <property type="match status" value="1"/>
</dbReference>
<dbReference type="InterPro" id="IPR003958">
    <property type="entry name" value="CBFA_NFYB_domain"/>
</dbReference>
<dbReference type="InterPro" id="IPR009072">
    <property type="entry name" value="Histone-fold"/>
</dbReference>
<dbReference type="InterPro" id="IPR027113">
    <property type="entry name" value="Transc_fact_NFYB/HAP3"/>
</dbReference>
<dbReference type="InterPro" id="IPR003956">
    <property type="entry name" value="Transcrpt_fac_NFYB/HAP3_CS"/>
</dbReference>
<dbReference type="PANTHER" id="PTHR11064">
    <property type="entry name" value="CCAAT-BINDING TRANSCRIPTION FACTOR-RELATED"/>
    <property type="match status" value="1"/>
</dbReference>
<dbReference type="PANTHER" id="PTHR11064:SF141">
    <property type="entry name" value="NUCLEAR TRANSCRIPTION FACTOR Y SUBUNIT B-1"/>
    <property type="match status" value="1"/>
</dbReference>
<dbReference type="Pfam" id="PF00808">
    <property type="entry name" value="CBFD_NFYB_HMF"/>
    <property type="match status" value="1"/>
</dbReference>
<dbReference type="PRINTS" id="PR00615">
    <property type="entry name" value="CCAATSUBUNTA"/>
</dbReference>
<dbReference type="SUPFAM" id="SSF47113">
    <property type="entry name" value="Histone-fold"/>
    <property type="match status" value="1"/>
</dbReference>
<dbReference type="PROSITE" id="PS00685">
    <property type="entry name" value="NFYB_HAP3"/>
    <property type="match status" value="1"/>
</dbReference>
<reference key="1">
    <citation type="journal article" date="1998" name="Plant Physiol.">
        <title>Multiple genes encoding the conserved CCAAT-box transcription factor complex are expressed in Arabidopsis.</title>
        <authorList>
            <person name="Edwards D."/>
            <person name="Murray J.A.H."/>
            <person name="Smith A.G."/>
        </authorList>
    </citation>
    <scope>NUCLEOTIDE SEQUENCE [MRNA]</scope>
    <scope>TISSUE SPECIFICITY</scope>
</reference>
<reference key="2">
    <citation type="journal article" date="1999" name="Nature">
        <title>Sequence and analysis of chromosome 2 of the plant Arabidopsis thaliana.</title>
        <authorList>
            <person name="Lin X."/>
            <person name="Kaul S."/>
            <person name="Rounsley S.D."/>
            <person name="Shea T.P."/>
            <person name="Benito M.-I."/>
            <person name="Town C.D."/>
            <person name="Fujii C.Y."/>
            <person name="Mason T.M."/>
            <person name="Bowman C.L."/>
            <person name="Barnstead M.E."/>
            <person name="Feldblyum T.V."/>
            <person name="Buell C.R."/>
            <person name="Ketchum K.A."/>
            <person name="Lee J.J."/>
            <person name="Ronning C.M."/>
            <person name="Koo H.L."/>
            <person name="Moffat K.S."/>
            <person name="Cronin L.A."/>
            <person name="Shen M."/>
            <person name="Pai G."/>
            <person name="Van Aken S."/>
            <person name="Umayam L."/>
            <person name="Tallon L.J."/>
            <person name="Gill J.E."/>
            <person name="Adams M.D."/>
            <person name="Carrera A.J."/>
            <person name="Creasy T.H."/>
            <person name="Goodman H.M."/>
            <person name="Somerville C.R."/>
            <person name="Copenhaver G.P."/>
            <person name="Preuss D."/>
            <person name="Nierman W.C."/>
            <person name="White O."/>
            <person name="Eisen J.A."/>
            <person name="Salzberg S.L."/>
            <person name="Fraser C.M."/>
            <person name="Venter J.C."/>
        </authorList>
    </citation>
    <scope>NUCLEOTIDE SEQUENCE [LARGE SCALE GENOMIC DNA]</scope>
    <source>
        <strain>cv. Columbia</strain>
    </source>
</reference>
<reference key="3">
    <citation type="journal article" date="2017" name="Plant J.">
        <title>Araport11: a complete reannotation of the Arabidopsis thaliana reference genome.</title>
        <authorList>
            <person name="Cheng C.Y."/>
            <person name="Krishnakumar V."/>
            <person name="Chan A.P."/>
            <person name="Thibaud-Nissen F."/>
            <person name="Schobel S."/>
            <person name="Town C.D."/>
        </authorList>
    </citation>
    <scope>GENOME REANNOTATION</scope>
    <source>
        <strain>cv. Columbia</strain>
    </source>
</reference>
<reference key="4">
    <citation type="journal article" date="2003" name="Science">
        <title>Empirical analysis of transcriptional activity in the Arabidopsis genome.</title>
        <authorList>
            <person name="Yamada K."/>
            <person name="Lim J."/>
            <person name="Dale J.M."/>
            <person name="Chen H."/>
            <person name="Shinn P."/>
            <person name="Palm C.J."/>
            <person name="Southwick A.M."/>
            <person name="Wu H.C."/>
            <person name="Kim C.J."/>
            <person name="Nguyen M."/>
            <person name="Pham P.K."/>
            <person name="Cheuk R.F."/>
            <person name="Karlin-Newmann G."/>
            <person name="Liu S.X."/>
            <person name="Lam B."/>
            <person name="Sakano H."/>
            <person name="Wu T."/>
            <person name="Yu G."/>
            <person name="Miranda M."/>
            <person name="Quach H.L."/>
            <person name="Tripp M."/>
            <person name="Chang C.H."/>
            <person name="Lee J.M."/>
            <person name="Toriumi M.J."/>
            <person name="Chan M.M."/>
            <person name="Tang C.C."/>
            <person name="Onodera C.S."/>
            <person name="Deng J.M."/>
            <person name="Akiyama K."/>
            <person name="Ansari Y."/>
            <person name="Arakawa T."/>
            <person name="Banh J."/>
            <person name="Banno F."/>
            <person name="Bowser L."/>
            <person name="Brooks S.Y."/>
            <person name="Carninci P."/>
            <person name="Chao Q."/>
            <person name="Choy N."/>
            <person name="Enju A."/>
            <person name="Goldsmith A.D."/>
            <person name="Gurjal M."/>
            <person name="Hansen N.F."/>
            <person name="Hayashizaki Y."/>
            <person name="Johnson-Hopson C."/>
            <person name="Hsuan V.W."/>
            <person name="Iida K."/>
            <person name="Karnes M."/>
            <person name="Khan S."/>
            <person name="Koesema E."/>
            <person name="Ishida J."/>
            <person name="Jiang P.X."/>
            <person name="Jones T."/>
            <person name="Kawai J."/>
            <person name="Kamiya A."/>
            <person name="Meyers C."/>
            <person name="Nakajima M."/>
            <person name="Narusaka M."/>
            <person name="Seki M."/>
            <person name="Sakurai T."/>
            <person name="Satou M."/>
            <person name="Tamse R."/>
            <person name="Vaysberg M."/>
            <person name="Wallender E.K."/>
            <person name="Wong C."/>
            <person name="Yamamura Y."/>
            <person name="Yuan S."/>
            <person name="Shinozaki K."/>
            <person name="Davis R.W."/>
            <person name="Theologis A."/>
            <person name="Ecker J.R."/>
        </authorList>
    </citation>
    <scope>NUCLEOTIDE SEQUENCE [LARGE SCALE MRNA]</scope>
    <source>
        <strain>cv. Columbia</strain>
    </source>
</reference>
<reference key="5">
    <citation type="submission" date="2002-03" db="EMBL/GenBank/DDBJ databases">
        <title>Full-length cDNA from Arabidopsis thaliana.</title>
        <authorList>
            <person name="Brover V.V."/>
            <person name="Troukhan M.E."/>
            <person name="Alexandrov N.A."/>
            <person name="Lu Y.-P."/>
            <person name="Flavell R.B."/>
            <person name="Feldmann K.A."/>
        </authorList>
    </citation>
    <scope>NUCLEOTIDE SEQUENCE [LARGE SCALE MRNA]</scope>
</reference>
<reference key="6">
    <citation type="journal article" date="2001" name="Gene">
        <title>Regulation of the CCAAT-binding NF-Y subunits in Arabidopsis thaliana.</title>
        <authorList>
            <person name="Gusmaroli G."/>
            <person name="Tonelli C."/>
            <person name="Mantovani R."/>
        </authorList>
    </citation>
    <scope>TISSUE SPECIFICITY</scope>
</reference>
<reference key="7">
    <citation type="journal article" date="2002" name="Gene">
        <title>Regulation of novel members of the Arabidopsis thaliana CCAAT-binding nuclear factor Y subunits.</title>
        <authorList>
            <person name="Gusmaroli G."/>
            <person name="Tonelli C."/>
            <person name="Mantovani R."/>
        </authorList>
    </citation>
    <scope>GENE FAMILY</scope>
    <scope>NOMENCLATURE</scope>
</reference>
<reference key="8">
    <citation type="journal article" date="2012" name="Mol. Cell. Proteomics">
        <title>Comparative large-scale characterisation of plant vs. mammal proteins reveals similar and idiosyncratic N-alpha acetylation features.</title>
        <authorList>
            <person name="Bienvenut W.V."/>
            <person name="Sumpton D."/>
            <person name="Martinez A."/>
            <person name="Lilla S."/>
            <person name="Espagne C."/>
            <person name="Meinnel T."/>
            <person name="Giglione C."/>
        </authorList>
    </citation>
    <scope>ACETYLATION [LARGE SCALE ANALYSIS] AT ALA-2</scope>
    <scope>CLEAVAGE OF INITIATOR METHIONINE [LARGE SCALE ANALYSIS]</scope>
    <scope>IDENTIFICATION BY MASS SPECTROMETRY [LARGE SCALE ANALYSIS]</scope>
</reference>
<reference key="9">
    <citation type="journal article" date="2014" name="Plant Cell">
        <title>Arabidopsis DPB3-1, a DREB2A interactor, specifically enhances heat stress-induced gene expression by forming a heat stress-specific transcriptional complex with NF-Y subunits.</title>
        <authorList>
            <person name="Sato H."/>
            <person name="Mizoi J."/>
            <person name="Tanaka H."/>
            <person name="Maruyama K."/>
            <person name="Qin F."/>
            <person name="Osakabe Y."/>
            <person name="Morimoto K."/>
            <person name="Ohori T."/>
            <person name="Kusakabe K."/>
            <person name="Nagata M."/>
            <person name="Shinozaki K."/>
            <person name="Yamaguchi-Shinozaki K."/>
        </authorList>
    </citation>
    <scope>INTERACTION WITH DPB3-1</scope>
    <scope>INDUCTION BY HEAT AND DEHYDRATION</scope>
    <source>
        <strain>cv. Columbia</strain>
    </source>
</reference>
<reference key="10">
    <citation type="journal article" date="2016" name="Front. Plant Sci.">
        <title>The Arabidopsis thaliana Nuclear Factor Y Transcription Factors.</title>
        <authorList>
            <person name="Zhao H."/>
            <person name="Wu D."/>
            <person name="Kong F."/>
            <person name="Lin K."/>
            <person name="Zhang H."/>
            <person name="Li G."/>
        </authorList>
    </citation>
    <scope>REVIEW</scope>
</reference>
<protein>
    <recommendedName>
        <fullName evidence="9">Nuclear transcription factor Y subunit B-1</fullName>
        <shortName evidence="9">AtNF-YB-1</shortName>
        <shortName evidence="10">AtNF-YB1</shortName>
    </recommendedName>
    <alternativeName>
        <fullName evidence="11">Transcriptional activator HAP3A</fullName>
    </alternativeName>
</protein>
<organism>
    <name type="scientific">Arabidopsis thaliana</name>
    <name type="common">Mouse-ear cress</name>
    <dbReference type="NCBI Taxonomy" id="3702"/>
    <lineage>
        <taxon>Eukaryota</taxon>
        <taxon>Viridiplantae</taxon>
        <taxon>Streptophyta</taxon>
        <taxon>Embryophyta</taxon>
        <taxon>Tracheophyta</taxon>
        <taxon>Spermatophyta</taxon>
        <taxon>Magnoliopsida</taxon>
        <taxon>eudicotyledons</taxon>
        <taxon>Gunneridae</taxon>
        <taxon>Pentapetalae</taxon>
        <taxon>rosids</taxon>
        <taxon>malvids</taxon>
        <taxon>Brassicales</taxon>
        <taxon>Brassicaceae</taxon>
        <taxon>Camelineae</taxon>
        <taxon>Arabidopsis</taxon>
    </lineage>
</organism>
<accession>Q9SLG0</accession>
<accession>O23633</accession>
<name>NFYB1_ARATH</name>
<evidence type="ECO:0000250" key="1"/>
<evidence type="ECO:0000250" key="2">
    <source>
        <dbReference type="UniProtKB" id="P13434"/>
    </source>
</evidence>
<evidence type="ECO:0000250" key="3">
    <source>
        <dbReference type="UniProtKB" id="P23511"/>
    </source>
</evidence>
<evidence type="ECO:0000250" key="4">
    <source>
        <dbReference type="UniProtKB" id="Q84W66"/>
    </source>
</evidence>
<evidence type="ECO:0000256" key="5">
    <source>
        <dbReference type="SAM" id="MobiDB-lite"/>
    </source>
</evidence>
<evidence type="ECO:0000269" key="6">
    <source>
    </source>
</evidence>
<evidence type="ECO:0000269" key="7">
    <source>
    </source>
</evidence>
<evidence type="ECO:0000269" key="8">
    <source>
    </source>
</evidence>
<evidence type="ECO:0000303" key="9">
    <source>
    </source>
</evidence>
<evidence type="ECO:0000303" key="10">
    <source>
    </source>
</evidence>
<evidence type="ECO:0000303" key="11">
    <source>
    </source>
</evidence>
<evidence type="ECO:0000305" key="12"/>
<evidence type="ECO:0000312" key="13">
    <source>
        <dbReference type="Araport" id="AT2G38880"/>
    </source>
</evidence>
<evidence type="ECO:0000312" key="14">
    <source>
        <dbReference type="EMBL" id="AAC79602.2"/>
    </source>
</evidence>
<evidence type="ECO:0007744" key="15">
    <source>
    </source>
</evidence>
<feature type="initiator methionine" description="Removed" evidence="15">
    <location>
        <position position="1"/>
    </location>
</feature>
<feature type="chain" id="PRO_0000204615" description="Nuclear transcription factor Y subunit B-1">
    <location>
        <begin position="2"/>
        <end position="141"/>
    </location>
</feature>
<feature type="DNA-binding region" evidence="2">
    <location>
        <begin position="26"/>
        <end position="32"/>
    </location>
</feature>
<feature type="region of interest" description="Disordered" evidence="5">
    <location>
        <begin position="1"/>
        <end position="23"/>
    </location>
</feature>
<feature type="region of interest" description="Subunit association domain (SAD)" evidence="1">
    <location>
        <begin position="53"/>
        <end position="64"/>
    </location>
</feature>
<feature type="region of interest" description="Disordered" evidence="5">
    <location>
        <begin position="114"/>
        <end position="141"/>
    </location>
</feature>
<feature type="modified residue" description="N-acetylalanine" evidence="15">
    <location>
        <position position="2"/>
    </location>
</feature>
<proteinExistence type="evidence at protein level"/>
<sequence length="141" mass="15181">MADTPSSPAGDGGESGGSVREQDRYLPIANISRIMKKALPPNGKIGKDAKDTVQECVSEFISFITSEASDKCQKEKRKTVNGDDLLWAMATLGFEDYLEPLKIYLARYRELEGDNKGSGKSGDGSNRDAGGGVSGEEMPSW</sequence>
<gene>
    <name evidence="9" type="primary">NFYB1</name>
    <name evidence="11" type="synonym">HAP3A</name>
    <name evidence="13" type="ordered locus">At2g38880</name>
    <name evidence="14" type="ORF">T7F6.5</name>
</gene>
<comment type="function">
    <text evidence="4">Component of the NF-Y/HAP transcription factor complex (By similarity). The NF-Y complex stimulates the transcription of various genes by recognizing and binding to a CCAAT motif in promoters (By similarity).</text>
</comment>
<comment type="subunit">
    <text evidence="3 7">Heterotrimeric transcription factor composed of three components, NF-YA, NF-YB and NF-YC (By similarity). NF-YB and NF-YC must interact and dimerize for NF-YA association and DNA binding (By similarity). Binds directly with DPB3-1 (PubMed:25490919).</text>
</comment>
<comment type="interaction">
    <interactant intactId="EBI-2126009">
        <id>Q9SLG0</id>
    </interactant>
    <interactant intactId="EBI-1639724">
        <id>Q39057</id>
        <label>CO</label>
    </interactant>
    <organismsDiffer>false</organismsDiffer>
    <experiments>6</experiments>
</comment>
<comment type="interaction">
    <interactant intactId="EBI-2126009">
        <id>Q9SLG0</id>
    </interactant>
    <interactant intactId="EBI-15191737">
        <id>Q58CM8</id>
        <label>NFYC10</label>
    </interactant>
    <organismsDiffer>false</organismsDiffer>
    <experiments>3</experiments>
</comment>
<comment type="interaction">
    <interactant intactId="EBI-2126009">
        <id>Q9SLG0</id>
    </interactant>
    <interactant intactId="EBI-2466133">
        <id>Q9FGP8</id>
        <label>NFYC7</label>
    </interactant>
    <organismsDiffer>false</organismsDiffer>
    <experiments>3</experiments>
</comment>
<comment type="interaction">
    <interactant intactId="EBI-2126009">
        <id>Q9SLG0</id>
    </interactant>
    <interactant intactId="EBI-15191571">
        <id>Q4PSE2</id>
        <label>NFYC8</label>
    </interactant>
    <organismsDiffer>false</organismsDiffer>
    <experiments>3</experiments>
</comment>
<comment type="interaction">
    <interactant intactId="EBI-2126009">
        <id>Q9SLG0</id>
    </interactant>
    <interactant intactId="EBI-2466050">
        <id>Q8L4B2</id>
        <label>NFYC9</label>
    </interactant>
    <organismsDiffer>false</organismsDiffer>
    <experiments>3</experiments>
</comment>
<comment type="interaction">
    <interactant intactId="EBI-2126009">
        <id>Q9SLG0</id>
    </interactant>
    <interactant intactId="EBI-1247587">
        <id>Q9M565</id>
        <label>TAF11</label>
    </interactant>
    <organismsDiffer>false</organismsDiffer>
    <experiments>3</experiments>
</comment>
<comment type="subcellular location">
    <subcellularLocation>
        <location evidence="12">Nucleus</location>
    </subcellularLocation>
</comment>
<comment type="alternative products">
    <event type="alternative splicing"/>
    <isoform>
        <id>Q9SLG0-1</id>
        <name>1</name>
        <sequence type="displayed"/>
    </isoform>
    <text>A number of isoforms are produced. According to EST sequences.</text>
</comment>
<comment type="tissue specificity">
    <text evidence="6 8">Ubiquitous. Predominantly expressed in leaves, flowers and siliques.</text>
</comment>
<comment type="induction">
    <text evidence="7">Enhanced by dehydration stress but repressed by heat stress.</text>
</comment>
<comment type="similarity">
    <text evidence="12">Belongs to the NFYB/HAP3 subunit family.</text>
</comment>
<keyword id="KW-0007">Acetylation</keyword>
<keyword id="KW-0010">Activator</keyword>
<keyword id="KW-0025">Alternative splicing</keyword>
<keyword id="KW-0238">DNA-binding</keyword>
<keyword id="KW-0539">Nucleus</keyword>
<keyword id="KW-1185">Reference proteome</keyword>
<keyword id="KW-0804">Transcription</keyword>
<keyword id="KW-0805">Transcription regulation</keyword>